<dbReference type="EC" id="5.4.2.11" evidence="1"/>
<dbReference type="EMBL" id="CP000780">
    <property type="protein sequence ID" value="ABS55968.1"/>
    <property type="molecule type" value="Genomic_DNA"/>
</dbReference>
<dbReference type="RefSeq" id="WP_012107003.1">
    <property type="nucleotide sequence ID" value="NC_009712.1"/>
</dbReference>
<dbReference type="SMR" id="A7I8A7"/>
<dbReference type="STRING" id="456442.Mboo_1450"/>
<dbReference type="GeneID" id="5411395"/>
<dbReference type="KEGG" id="mbn:Mboo_1450"/>
<dbReference type="eggNOG" id="arCOG01993">
    <property type="taxonomic scope" value="Archaea"/>
</dbReference>
<dbReference type="HOGENOM" id="CLU_033323_1_1_2"/>
<dbReference type="OrthoDB" id="304253at2157"/>
<dbReference type="UniPathway" id="UPA00109">
    <property type="reaction ID" value="UER00186"/>
</dbReference>
<dbReference type="Proteomes" id="UP000002408">
    <property type="component" value="Chromosome"/>
</dbReference>
<dbReference type="GO" id="GO:0004619">
    <property type="term" value="F:phosphoglycerate mutase activity"/>
    <property type="evidence" value="ECO:0007669"/>
    <property type="project" value="UniProtKB-EC"/>
</dbReference>
<dbReference type="GO" id="GO:0006094">
    <property type="term" value="P:gluconeogenesis"/>
    <property type="evidence" value="ECO:0007669"/>
    <property type="project" value="UniProtKB-UniRule"/>
</dbReference>
<dbReference type="GO" id="GO:0006096">
    <property type="term" value="P:glycolytic process"/>
    <property type="evidence" value="ECO:0007669"/>
    <property type="project" value="UniProtKB-UniRule"/>
</dbReference>
<dbReference type="CDD" id="cd07067">
    <property type="entry name" value="HP_PGM_like"/>
    <property type="match status" value="1"/>
</dbReference>
<dbReference type="FunFam" id="3.40.50.1240:FF:000003">
    <property type="entry name" value="2,3-bisphosphoglycerate-dependent phosphoglycerate mutase"/>
    <property type="match status" value="1"/>
</dbReference>
<dbReference type="Gene3D" id="3.40.50.1240">
    <property type="entry name" value="Phosphoglycerate mutase-like"/>
    <property type="match status" value="1"/>
</dbReference>
<dbReference type="HAMAP" id="MF_01039">
    <property type="entry name" value="PGAM_GpmA"/>
    <property type="match status" value="1"/>
</dbReference>
<dbReference type="InterPro" id="IPR013078">
    <property type="entry name" value="His_Pase_superF_clade-1"/>
</dbReference>
<dbReference type="InterPro" id="IPR029033">
    <property type="entry name" value="His_PPase_superfam"/>
</dbReference>
<dbReference type="InterPro" id="IPR001345">
    <property type="entry name" value="PG/BPGM_mutase_AS"/>
</dbReference>
<dbReference type="InterPro" id="IPR005952">
    <property type="entry name" value="Phosphogly_mut1"/>
</dbReference>
<dbReference type="NCBIfam" id="TIGR01258">
    <property type="entry name" value="pgm_1"/>
    <property type="match status" value="1"/>
</dbReference>
<dbReference type="NCBIfam" id="NF010713">
    <property type="entry name" value="PRK14115.1"/>
    <property type="match status" value="1"/>
</dbReference>
<dbReference type="PANTHER" id="PTHR11931">
    <property type="entry name" value="PHOSPHOGLYCERATE MUTASE"/>
    <property type="match status" value="1"/>
</dbReference>
<dbReference type="Pfam" id="PF00300">
    <property type="entry name" value="His_Phos_1"/>
    <property type="match status" value="2"/>
</dbReference>
<dbReference type="PIRSF" id="PIRSF000709">
    <property type="entry name" value="6PFK_2-Ptase"/>
    <property type="match status" value="1"/>
</dbReference>
<dbReference type="SMART" id="SM00855">
    <property type="entry name" value="PGAM"/>
    <property type="match status" value="1"/>
</dbReference>
<dbReference type="SUPFAM" id="SSF53254">
    <property type="entry name" value="Phosphoglycerate mutase-like"/>
    <property type="match status" value="1"/>
</dbReference>
<dbReference type="PROSITE" id="PS00175">
    <property type="entry name" value="PG_MUTASE"/>
    <property type="match status" value="1"/>
</dbReference>
<protein>
    <recommendedName>
        <fullName evidence="1">2,3-bisphosphoglycerate-dependent phosphoglycerate mutase</fullName>
        <shortName evidence="1">BPG-dependent PGAM</shortName>
        <shortName evidence="1">PGAM</shortName>
        <shortName evidence="1">Phosphoglyceromutase</shortName>
        <shortName evidence="1">dPGM</shortName>
        <ecNumber evidence="1">5.4.2.11</ecNumber>
    </recommendedName>
</protein>
<accession>A7I8A7</accession>
<evidence type="ECO:0000255" key="1">
    <source>
        <dbReference type="HAMAP-Rule" id="MF_01039"/>
    </source>
</evidence>
<gene>
    <name evidence="1" type="primary">gpmA</name>
    <name type="ordered locus">Mboo_1450</name>
</gene>
<proteinExistence type="inferred from homology"/>
<keyword id="KW-0312">Gluconeogenesis</keyword>
<keyword id="KW-0324">Glycolysis</keyword>
<keyword id="KW-0413">Isomerase</keyword>
<keyword id="KW-1185">Reference proteome</keyword>
<organism>
    <name type="scientific">Methanoregula boonei (strain DSM 21154 / JCM 14090 / 6A8)</name>
    <dbReference type="NCBI Taxonomy" id="456442"/>
    <lineage>
        <taxon>Archaea</taxon>
        <taxon>Methanobacteriati</taxon>
        <taxon>Methanobacteriota</taxon>
        <taxon>Stenosarchaea group</taxon>
        <taxon>Methanomicrobia</taxon>
        <taxon>Methanomicrobiales</taxon>
        <taxon>Methanoregulaceae</taxon>
        <taxon>Methanoregula</taxon>
    </lineage>
</organism>
<sequence length="249" mass="28506">MYTLVLLRHGESTWNKENRFTGWTDVDLSKDGIVEAGRSGRLLNEAGFTFDLCHTSVLRRAIRTLWIVLDTMDLMYLPVHHSWRLNERHYGALQGLDKRETTEKYGKEQVLLWRRGYAVRPPALAEEDPRHPRFDPRYAGLGPDALPATESLEDTLARVVPYWKNSIAPEVKAGKRILIAAHGNSIRALVKYLDHIPDNEITGLNIPTGFPLVYEIDKDLHPIRHYYLGDPDEIRRATESVADQTSARK</sequence>
<name>GPMA_METB6</name>
<reference key="1">
    <citation type="journal article" date="2015" name="Microbiology">
        <title>Genome of Methanoregula boonei 6A8 reveals adaptations to oligotrophic peatland environments.</title>
        <authorList>
            <person name="Braeuer S."/>
            <person name="Cadillo-Quiroz H."/>
            <person name="Kyrpides N."/>
            <person name="Woyke T."/>
            <person name="Goodwin L."/>
            <person name="Detter C."/>
            <person name="Podell S."/>
            <person name="Yavitt J.B."/>
            <person name="Zinder S.H."/>
        </authorList>
    </citation>
    <scope>NUCLEOTIDE SEQUENCE [LARGE SCALE GENOMIC DNA]</scope>
    <source>
        <strain>DSM 21154 / JCM 14090 / 6A8</strain>
    </source>
</reference>
<comment type="function">
    <text evidence="1">Catalyzes the interconversion of 2-phosphoglycerate and 3-phosphoglycerate.</text>
</comment>
<comment type="catalytic activity">
    <reaction evidence="1">
        <text>(2R)-2-phosphoglycerate = (2R)-3-phosphoglycerate</text>
        <dbReference type="Rhea" id="RHEA:15901"/>
        <dbReference type="ChEBI" id="CHEBI:58272"/>
        <dbReference type="ChEBI" id="CHEBI:58289"/>
        <dbReference type="EC" id="5.4.2.11"/>
    </reaction>
</comment>
<comment type="pathway">
    <text evidence="1">Carbohydrate degradation; glycolysis; pyruvate from D-glyceraldehyde 3-phosphate: step 3/5.</text>
</comment>
<comment type="similarity">
    <text evidence="1">Belongs to the phosphoglycerate mutase family. BPG-dependent PGAM subfamily.</text>
</comment>
<feature type="chain" id="PRO_1000064073" description="2,3-bisphosphoglycerate-dependent phosphoglycerate mutase">
    <location>
        <begin position="1"/>
        <end position="249"/>
    </location>
</feature>
<feature type="active site" description="Tele-phosphohistidine intermediate" evidence="1">
    <location>
        <position position="9"/>
    </location>
</feature>
<feature type="active site" description="Proton donor/acceptor" evidence="1">
    <location>
        <position position="87"/>
    </location>
</feature>
<feature type="binding site" evidence="1">
    <location>
        <begin position="8"/>
        <end position="15"/>
    </location>
    <ligand>
        <name>substrate</name>
    </ligand>
</feature>
<feature type="binding site" evidence="1">
    <location>
        <begin position="21"/>
        <end position="22"/>
    </location>
    <ligand>
        <name>substrate</name>
    </ligand>
</feature>
<feature type="binding site" evidence="1">
    <location>
        <position position="60"/>
    </location>
    <ligand>
        <name>substrate</name>
    </ligand>
</feature>
<feature type="binding site" evidence="1">
    <location>
        <begin position="87"/>
        <end position="90"/>
    </location>
    <ligand>
        <name>substrate</name>
    </ligand>
</feature>
<feature type="binding site" evidence="1">
    <location>
        <position position="98"/>
    </location>
    <ligand>
        <name>substrate</name>
    </ligand>
</feature>
<feature type="binding site" evidence="1">
    <location>
        <begin position="114"/>
        <end position="115"/>
    </location>
    <ligand>
        <name>substrate</name>
    </ligand>
</feature>
<feature type="binding site" evidence="1">
    <location>
        <begin position="183"/>
        <end position="184"/>
    </location>
    <ligand>
        <name>substrate</name>
    </ligand>
</feature>
<feature type="site" description="Transition state stabilizer" evidence="1">
    <location>
        <position position="182"/>
    </location>
</feature>